<organism evidence="3">
    <name type="scientific">Homo sapiens</name>
    <name type="common">Human</name>
    <dbReference type="NCBI Taxonomy" id="9606"/>
    <lineage>
        <taxon>Eukaryota</taxon>
        <taxon>Metazoa</taxon>
        <taxon>Chordata</taxon>
        <taxon>Craniata</taxon>
        <taxon>Vertebrata</taxon>
        <taxon>Euteleostomi</taxon>
        <taxon>Mammalia</taxon>
        <taxon>Eutheria</taxon>
        <taxon>Euarchontoglires</taxon>
        <taxon>Primates</taxon>
        <taxon>Haplorrhini</taxon>
        <taxon>Catarrhini</taxon>
        <taxon>Hominidae</taxon>
        <taxon>Homo</taxon>
    </lineage>
</organism>
<keyword id="KW-1185">Reference proteome</keyword>
<name>SGSN1_HUMAN</name>
<gene>
    <name evidence="2" type="primary">SMIM10L3</name>
    <name type="synonym">SAGSIN1</name>
</gene>
<sequence>MAAALSGLAVRLSRSAAARSYGVFCKGLTRTLLIFFDLAWRLRINFPYLYIVASMMLNVRLQVHIEIH</sequence>
<feature type="chain" id="PRO_0000460437" description="Small integral membrane protein 10-like protein 3">
    <location>
        <begin position="1"/>
        <end position="68"/>
    </location>
</feature>
<proteinExistence type="predicted"/>
<protein>
    <recommendedName>
        <fullName evidence="2">Small integral membrane protein 10-like protein 3</fullName>
    </recommendedName>
    <alternativeName>
        <fullName evidence="1">Salivary gland-specific protein SAGSIN1</fullName>
    </alternativeName>
</protein>
<accession>A0A0C4DGP1</accession>
<dbReference type="EMBL" id="AC009412">
    <property type="status" value="NOT_ANNOTATED_CDS"/>
    <property type="molecule type" value="Genomic_DNA"/>
</dbReference>
<dbReference type="RefSeq" id="NP_001382924.1">
    <property type="nucleotide sequence ID" value="NM_001395995.1"/>
</dbReference>
<dbReference type="MassIVE" id="A0A0C4DGP1"/>
<dbReference type="PeptideAtlas" id="A0A0C4DGP1"/>
<dbReference type="Ensembl" id="ENST00000578372.2">
    <property type="protein sequence ID" value="ENSP00000464009.1"/>
    <property type="gene ID" value="ENSG00000286075.3"/>
</dbReference>
<dbReference type="GeneID" id="122526779"/>
<dbReference type="MANE-Select" id="ENST00000578372.2">
    <property type="protein sequence ID" value="ENSP00000464009.1"/>
    <property type="RefSeq nucleotide sequence ID" value="NM_001395995.1"/>
    <property type="RefSeq protein sequence ID" value="NP_001382924.1"/>
</dbReference>
<dbReference type="AGR" id="HGNC:56768"/>
<dbReference type="GeneCards" id="SMIM10L3"/>
<dbReference type="HGNC" id="HGNC:56768">
    <property type="gene designation" value="SMIM10L3"/>
</dbReference>
<dbReference type="VEuPathDB" id="HostDB:ENSG00000286075"/>
<dbReference type="GeneTree" id="ENSGT00390000014547"/>
<dbReference type="HOGENOM" id="CLU_186454_1_0_1"/>
<dbReference type="InParanoid" id="A0A0C4DGP1"/>
<dbReference type="OMA" id="AWRLRIK"/>
<dbReference type="OrthoDB" id="9536825at2759"/>
<dbReference type="Proteomes" id="UP000005640">
    <property type="component" value="Chromosome 7"/>
</dbReference>
<dbReference type="Bgee" id="ENSG00000286075">
    <property type="expression patterns" value="Expressed in ventricular zone and 38 other cell types or tissues"/>
</dbReference>
<dbReference type="InterPro" id="IPR029367">
    <property type="entry name" value="SMIM10"/>
</dbReference>
<dbReference type="PANTHER" id="PTHR34446:SF1">
    <property type="entry name" value="SALIVARY GLAND SPECIFIC PROTEIN SAGSIN1"/>
    <property type="match status" value="1"/>
</dbReference>
<dbReference type="PANTHER" id="PTHR34446">
    <property type="entry name" value="SMALL INTEGRAL MEMBRANE PROTEIN 10"/>
    <property type="match status" value="1"/>
</dbReference>
<dbReference type="Pfam" id="PF15118">
    <property type="entry name" value="DUF4560"/>
    <property type="match status" value="1"/>
</dbReference>
<reference key="1">
    <citation type="journal article" date="2003" name="Nature">
        <title>The DNA sequence of human chromosome 7.</title>
        <authorList>
            <person name="Hillier L.W."/>
            <person name="Fulton R.S."/>
            <person name="Fulton L.A."/>
            <person name="Graves T.A."/>
            <person name="Pepin K.H."/>
            <person name="Wagner-McPherson C."/>
            <person name="Layman D."/>
            <person name="Maas J."/>
            <person name="Jaeger S."/>
            <person name="Walker R."/>
            <person name="Wylie K."/>
            <person name="Sekhon M."/>
            <person name="Becker M.C."/>
            <person name="O'Laughlin M.D."/>
            <person name="Schaller M.E."/>
            <person name="Fewell G.A."/>
            <person name="Delehaunty K.D."/>
            <person name="Miner T.L."/>
            <person name="Nash W.E."/>
            <person name="Cordes M."/>
            <person name="Du H."/>
            <person name="Sun H."/>
            <person name="Edwards J."/>
            <person name="Bradshaw-Cordum H."/>
            <person name="Ali J."/>
            <person name="Andrews S."/>
            <person name="Isak A."/>
            <person name="Vanbrunt A."/>
            <person name="Nguyen C."/>
            <person name="Du F."/>
            <person name="Lamar B."/>
            <person name="Courtney L."/>
            <person name="Kalicki J."/>
            <person name="Ozersky P."/>
            <person name="Bielicki L."/>
            <person name="Scott K."/>
            <person name="Holmes A."/>
            <person name="Harkins R."/>
            <person name="Harris A."/>
            <person name="Strong C.M."/>
            <person name="Hou S."/>
            <person name="Tomlinson C."/>
            <person name="Dauphin-Kohlberg S."/>
            <person name="Kozlowicz-Reilly A."/>
            <person name="Leonard S."/>
            <person name="Rohlfing T."/>
            <person name="Rock S.M."/>
            <person name="Tin-Wollam A.-M."/>
            <person name="Abbott A."/>
            <person name="Minx P."/>
            <person name="Maupin R."/>
            <person name="Strowmatt C."/>
            <person name="Latreille P."/>
            <person name="Miller N."/>
            <person name="Johnson D."/>
            <person name="Murray J."/>
            <person name="Woessner J.P."/>
            <person name="Wendl M.C."/>
            <person name="Yang S.-P."/>
            <person name="Schultz B.R."/>
            <person name="Wallis J.W."/>
            <person name="Spieth J."/>
            <person name="Bieri T.A."/>
            <person name="Nelson J.O."/>
            <person name="Berkowicz N."/>
            <person name="Wohldmann P.E."/>
            <person name="Cook L.L."/>
            <person name="Hickenbotham M.T."/>
            <person name="Eldred J."/>
            <person name="Williams D."/>
            <person name="Bedell J.A."/>
            <person name="Mardis E.R."/>
            <person name="Clifton S.W."/>
            <person name="Chissoe S.L."/>
            <person name="Marra M.A."/>
            <person name="Raymond C."/>
            <person name="Haugen E."/>
            <person name="Gillett W."/>
            <person name="Zhou Y."/>
            <person name="James R."/>
            <person name="Phelps K."/>
            <person name="Iadanoto S."/>
            <person name="Bubb K."/>
            <person name="Simms E."/>
            <person name="Levy R."/>
            <person name="Clendenning J."/>
            <person name="Kaul R."/>
            <person name="Kent W.J."/>
            <person name="Furey T.S."/>
            <person name="Baertsch R.A."/>
            <person name="Brent M.R."/>
            <person name="Keibler E."/>
            <person name="Flicek P."/>
            <person name="Bork P."/>
            <person name="Suyama M."/>
            <person name="Bailey J.A."/>
            <person name="Portnoy M.E."/>
            <person name="Torrents D."/>
            <person name="Chinwalla A.T."/>
            <person name="Gish W.R."/>
            <person name="Eddy S.R."/>
            <person name="McPherson J.D."/>
            <person name="Olson M.V."/>
            <person name="Eichler E.E."/>
            <person name="Green E.D."/>
            <person name="Waterston R.H."/>
            <person name="Wilson R.K."/>
        </authorList>
    </citation>
    <scope>NUCLEOTIDE SEQUENCE [LARGE SCALE GENOMIC DNA]</scope>
</reference>
<evidence type="ECO:0000250" key="1">
    <source>
        <dbReference type="UniProtKB" id="Q5U425"/>
    </source>
</evidence>
<evidence type="ECO:0000312" key="2">
    <source>
        <dbReference type="HGNC" id="HGNC:56768"/>
    </source>
</evidence>
<evidence type="ECO:0000312" key="3">
    <source>
        <dbReference type="Proteomes" id="UP000005640"/>
    </source>
</evidence>